<comment type="function">
    <text evidence="1">Involved in the catabolism of L-rhamnose (6-deoxy-L-mannose). Catalyzes the transfer of the gamma-phosphate group from ATP to the 1-hydroxyl group of L-rhamnulose to yield L-rhamnulose 1-phosphate.</text>
</comment>
<comment type="catalytic activity">
    <reaction evidence="1">
        <text>L-rhamnulose + ATP = L-rhamnulose 1-phosphate + ADP + H(+)</text>
        <dbReference type="Rhea" id="RHEA:20117"/>
        <dbReference type="ChEBI" id="CHEBI:15378"/>
        <dbReference type="ChEBI" id="CHEBI:17897"/>
        <dbReference type="ChEBI" id="CHEBI:30616"/>
        <dbReference type="ChEBI" id="CHEBI:58313"/>
        <dbReference type="ChEBI" id="CHEBI:456216"/>
        <dbReference type="EC" id="2.7.1.5"/>
    </reaction>
</comment>
<comment type="cofactor">
    <cofactor evidence="1">
        <name>Mg(2+)</name>
        <dbReference type="ChEBI" id="CHEBI:18420"/>
    </cofactor>
</comment>
<comment type="pathway">
    <text evidence="1">Carbohydrate degradation; L-rhamnose degradation; glycerone phosphate from L-rhamnose: step 2/3.</text>
</comment>
<comment type="similarity">
    <text evidence="1">Belongs to the rhamnulokinase family.</text>
</comment>
<name>RHAB_SALNS</name>
<evidence type="ECO:0000255" key="1">
    <source>
        <dbReference type="HAMAP-Rule" id="MF_01535"/>
    </source>
</evidence>
<sequence>MTFRHCVAVDLGASSGRVMLARYDSKHRTLTLREIHRFVNCLQKTDGFDTWDIDSLEKDIRLGLKKVCNEGILIDSIGIDTWGVDYVLLDKQGQRVGLPVSYRDNRTTGIMPQALVQIGKSEIYRRSGIQFLPFNTIYQLRALTKQQPELTAQVAHALLMPDYFSYRLTGEMNWEYTNATTTQLVNINTDDWDDTLLAWTGAKKSWFGRPSHPGNVIGDWICPQGNRIPVVAVASHDTASAVIASPLANKHSAYLSSGTWSLMGFESKKPYTTDEALAANITNEGGAEGRYRVLKNIMGLWLLQRVLKERRITDLPALIAQTEALPACRFLINPNDDRFINPDDMHAEIQAACRETDQPVPVSDAELARCIFDSLALLYADILHELANLRGEKFTQLHIVGGGCQNALLNQLCADACGIRVMAGPVEASTLGNIGIQLMTLDELNNVDDFRQVVSANYDLTTYIPNPDSEIARHVAQFQPKRQTKELCA</sequence>
<dbReference type="EC" id="2.7.1.5" evidence="1"/>
<dbReference type="EMBL" id="CP001113">
    <property type="protein sequence ID" value="ACF62857.1"/>
    <property type="molecule type" value="Genomic_DNA"/>
</dbReference>
<dbReference type="RefSeq" id="WP_000143957.1">
    <property type="nucleotide sequence ID" value="NZ_CCMR01000001.1"/>
</dbReference>
<dbReference type="SMR" id="B4SZZ2"/>
<dbReference type="KEGG" id="see:SNSL254_A4330"/>
<dbReference type="HOGENOM" id="CLU_039395_0_0_6"/>
<dbReference type="UniPathway" id="UPA00541">
    <property type="reaction ID" value="UER00602"/>
</dbReference>
<dbReference type="Proteomes" id="UP000008824">
    <property type="component" value="Chromosome"/>
</dbReference>
<dbReference type="GO" id="GO:0005829">
    <property type="term" value="C:cytosol"/>
    <property type="evidence" value="ECO:0007669"/>
    <property type="project" value="TreeGrafter"/>
</dbReference>
<dbReference type="GO" id="GO:0005524">
    <property type="term" value="F:ATP binding"/>
    <property type="evidence" value="ECO:0007669"/>
    <property type="project" value="UniProtKB-KW"/>
</dbReference>
<dbReference type="GO" id="GO:0004370">
    <property type="term" value="F:glycerol kinase activity"/>
    <property type="evidence" value="ECO:0007669"/>
    <property type="project" value="TreeGrafter"/>
</dbReference>
<dbReference type="GO" id="GO:0008993">
    <property type="term" value="F:rhamnulokinase activity"/>
    <property type="evidence" value="ECO:0007669"/>
    <property type="project" value="UniProtKB-UniRule"/>
</dbReference>
<dbReference type="GO" id="GO:0006071">
    <property type="term" value="P:glycerol metabolic process"/>
    <property type="evidence" value="ECO:0007669"/>
    <property type="project" value="TreeGrafter"/>
</dbReference>
<dbReference type="GO" id="GO:0019301">
    <property type="term" value="P:rhamnose catabolic process"/>
    <property type="evidence" value="ECO:0007669"/>
    <property type="project" value="UniProtKB-UniRule"/>
</dbReference>
<dbReference type="CDD" id="cd07771">
    <property type="entry name" value="ASKHA_NBD_FGGY_RhaB-like"/>
    <property type="match status" value="1"/>
</dbReference>
<dbReference type="FunFam" id="3.30.420.40:FF:000064">
    <property type="entry name" value="Rhamnulokinase"/>
    <property type="match status" value="1"/>
</dbReference>
<dbReference type="FunFam" id="3.30.420.40:FF:000073">
    <property type="entry name" value="Rhamnulokinase"/>
    <property type="match status" value="1"/>
</dbReference>
<dbReference type="Gene3D" id="3.30.420.40">
    <property type="match status" value="2"/>
</dbReference>
<dbReference type="HAMAP" id="MF_01535">
    <property type="entry name" value="Rhamnulokinase"/>
    <property type="match status" value="1"/>
</dbReference>
<dbReference type="InterPro" id="IPR043129">
    <property type="entry name" value="ATPase_NBD"/>
</dbReference>
<dbReference type="InterPro" id="IPR018485">
    <property type="entry name" value="FGGY_C"/>
</dbReference>
<dbReference type="InterPro" id="IPR018484">
    <property type="entry name" value="FGGY_N"/>
</dbReference>
<dbReference type="InterPro" id="IPR013449">
    <property type="entry name" value="Rhamnulokinase"/>
</dbReference>
<dbReference type="NCBIfam" id="NF007925">
    <property type="entry name" value="PRK10640.1"/>
    <property type="match status" value="1"/>
</dbReference>
<dbReference type="NCBIfam" id="TIGR02627">
    <property type="entry name" value="rhamnulo_kin"/>
    <property type="match status" value="1"/>
</dbReference>
<dbReference type="PANTHER" id="PTHR10196:SF93">
    <property type="entry name" value="L-RHAMNULOKINASE"/>
    <property type="match status" value="1"/>
</dbReference>
<dbReference type="PANTHER" id="PTHR10196">
    <property type="entry name" value="SUGAR KINASE"/>
    <property type="match status" value="1"/>
</dbReference>
<dbReference type="Pfam" id="PF02782">
    <property type="entry name" value="FGGY_C"/>
    <property type="match status" value="1"/>
</dbReference>
<dbReference type="Pfam" id="PF00370">
    <property type="entry name" value="FGGY_N"/>
    <property type="match status" value="1"/>
</dbReference>
<dbReference type="SUPFAM" id="SSF53067">
    <property type="entry name" value="Actin-like ATPase domain"/>
    <property type="match status" value="2"/>
</dbReference>
<organism>
    <name type="scientific">Salmonella newport (strain SL254)</name>
    <dbReference type="NCBI Taxonomy" id="423368"/>
    <lineage>
        <taxon>Bacteria</taxon>
        <taxon>Pseudomonadati</taxon>
        <taxon>Pseudomonadota</taxon>
        <taxon>Gammaproteobacteria</taxon>
        <taxon>Enterobacterales</taxon>
        <taxon>Enterobacteriaceae</taxon>
        <taxon>Salmonella</taxon>
    </lineage>
</organism>
<gene>
    <name evidence="1" type="primary">rhaB</name>
    <name type="ordered locus">SNSL254_A4330</name>
</gene>
<proteinExistence type="inferred from homology"/>
<reference key="1">
    <citation type="journal article" date="2011" name="J. Bacteriol.">
        <title>Comparative genomics of 28 Salmonella enterica isolates: evidence for CRISPR-mediated adaptive sublineage evolution.</title>
        <authorList>
            <person name="Fricke W.F."/>
            <person name="Mammel M.K."/>
            <person name="McDermott P.F."/>
            <person name="Tartera C."/>
            <person name="White D.G."/>
            <person name="Leclerc J.E."/>
            <person name="Ravel J."/>
            <person name="Cebula T.A."/>
        </authorList>
    </citation>
    <scope>NUCLEOTIDE SEQUENCE [LARGE SCALE GENOMIC DNA]</scope>
    <source>
        <strain>SL254</strain>
    </source>
</reference>
<keyword id="KW-0067">ATP-binding</keyword>
<keyword id="KW-1015">Disulfide bond</keyword>
<keyword id="KW-0418">Kinase</keyword>
<keyword id="KW-0460">Magnesium</keyword>
<keyword id="KW-0547">Nucleotide-binding</keyword>
<keyword id="KW-0684">Rhamnose metabolism</keyword>
<keyword id="KW-0808">Transferase</keyword>
<protein>
    <recommendedName>
        <fullName evidence="1">Rhamnulokinase</fullName>
        <shortName evidence="1">RhaB</shortName>
        <ecNumber evidence="1">2.7.1.5</ecNumber>
    </recommendedName>
    <alternativeName>
        <fullName evidence="1">ATP:L-rhamnulose phosphotransferase</fullName>
    </alternativeName>
    <alternativeName>
        <fullName evidence="1">L-rhamnulose 1-kinase</fullName>
    </alternativeName>
    <alternativeName>
        <fullName evidence="1">Rhamnulose kinase</fullName>
    </alternativeName>
</protein>
<accession>B4SZZ2</accession>
<feature type="chain" id="PRO_1000146553" description="Rhamnulokinase">
    <location>
        <begin position="1"/>
        <end position="489"/>
    </location>
</feature>
<feature type="active site" description="Proton acceptor" evidence="1">
    <location>
        <position position="237"/>
    </location>
</feature>
<feature type="binding site" evidence="1">
    <location>
        <begin position="13"/>
        <end position="17"/>
    </location>
    <ligand>
        <name>ATP</name>
        <dbReference type="ChEBI" id="CHEBI:30616"/>
    </ligand>
</feature>
<feature type="binding site" evidence="1">
    <location>
        <position position="83"/>
    </location>
    <ligand>
        <name>substrate</name>
    </ligand>
</feature>
<feature type="binding site" evidence="1">
    <location>
        <begin position="236"/>
        <end position="238"/>
    </location>
    <ligand>
        <name>substrate</name>
    </ligand>
</feature>
<feature type="binding site" evidence="1">
    <location>
        <position position="259"/>
    </location>
    <ligand>
        <name>ATP</name>
        <dbReference type="ChEBI" id="CHEBI:30616"/>
    </ligand>
</feature>
<feature type="binding site" evidence="1">
    <location>
        <position position="296"/>
    </location>
    <ligand>
        <name>substrate</name>
    </ligand>
</feature>
<feature type="binding site" evidence="1">
    <location>
        <position position="304"/>
    </location>
    <ligand>
        <name>ATP</name>
        <dbReference type="ChEBI" id="CHEBI:30616"/>
    </ligand>
</feature>
<feature type="binding site" evidence="1">
    <location>
        <position position="402"/>
    </location>
    <ligand>
        <name>ATP</name>
        <dbReference type="ChEBI" id="CHEBI:30616"/>
    </ligand>
</feature>
<feature type="disulfide bond" evidence="1">
    <location>
        <begin position="68"/>
        <end position="222"/>
    </location>
</feature>
<feature type="disulfide bond" evidence="1">
    <location>
        <begin position="353"/>
        <end position="370"/>
    </location>
</feature>
<feature type="disulfide bond" evidence="1">
    <location>
        <begin position="413"/>
        <end position="417"/>
    </location>
</feature>